<comment type="function">
    <text evidence="1">Part of a complex that catalyzes the reversible cleavage of acetyl-CoA, allowing autotrophic growth from CO(2). Probably maintains the overall quaternary structure of the ACDS complex.</text>
</comment>
<comment type="subunit">
    <text evidence="1">Heterodimer of delta and gamma chains. The ACDS complex is made up of alpha, epsilon, beta, gamma and delta chains with a probable stoichiometry of (alpha(2)epsilon(2))(4)-beta(8)-(gamma(1)delta(1))(8).</text>
</comment>
<comment type="similarity">
    <text evidence="1">Belongs to the CdhD family.</text>
</comment>
<dbReference type="EMBL" id="AE000782">
    <property type="protein sequence ID" value="AAB90859.1"/>
    <property type="molecule type" value="Genomic_DNA"/>
</dbReference>
<dbReference type="PIR" id="A69297">
    <property type="entry name" value="A69297"/>
</dbReference>
<dbReference type="RefSeq" id="WP_010877884.1">
    <property type="nucleotide sequence ID" value="NC_000917.1"/>
</dbReference>
<dbReference type="SMR" id="O29870"/>
<dbReference type="STRING" id="224325.AF_0377"/>
<dbReference type="PaxDb" id="224325-AF_0377"/>
<dbReference type="EnsemblBacteria" id="AAB90859">
    <property type="protein sequence ID" value="AAB90859"/>
    <property type="gene ID" value="AF_0377"/>
</dbReference>
<dbReference type="GeneID" id="24793916"/>
<dbReference type="KEGG" id="afu:AF_0377"/>
<dbReference type="eggNOG" id="arCOG01980">
    <property type="taxonomic scope" value="Archaea"/>
</dbReference>
<dbReference type="HOGENOM" id="CLU_040403_0_0_2"/>
<dbReference type="OrthoDB" id="67748at2157"/>
<dbReference type="PhylomeDB" id="O29870"/>
<dbReference type="BioCyc" id="MetaCyc:AF_RS01925-MONOMER"/>
<dbReference type="Proteomes" id="UP000002199">
    <property type="component" value="Chromosome"/>
</dbReference>
<dbReference type="GO" id="GO:0006730">
    <property type="term" value="P:one-carbon metabolic process"/>
    <property type="evidence" value="ECO:0007669"/>
    <property type="project" value="InterPro"/>
</dbReference>
<dbReference type="Gene3D" id="3.20.20.20">
    <property type="entry name" value="Dihydropteroate synthase-like"/>
    <property type="match status" value="1"/>
</dbReference>
<dbReference type="HAMAP" id="MF_01135">
    <property type="entry name" value="CdhD"/>
    <property type="match status" value="1"/>
</dbReference>
<dbReference type="InterPro" id="IPR016041">
    <property type="entry name" value="Ac-CoA_synth_d_su_TIM-brl"/>
</dbReference>
<dbReference type="InterPro" id="IPR051069">
    <property type="entry name" value="ACDS_complex_subunit"/>
</dbReference>
<dbReference type="InterPro" id="IPR004486">
    <property type="entry name" value="CO_DH/Ac-CoA_synth_dsu"/>
</dbReference>
<dbReference type="InterPro" id="IPR011005">
    <property type="entry name" value="Dihydropteroate_synth-like_sf"/>
</dbReference>
<dbReference type="NCBIfam" id="TIGR00381">
    <property type="entry name" value="cdhD"/>
    <property type="match status" value="1"/>
</dbReference>
<dbReference type="NCBIfam" id="NF003375">
    <property type="entry name" value="PRK04452.1-1"/>
    <property type="match status" value="1"/>
</dbReference>
<dbReference type="NCBIfam" id="NF003376">
    <property type="entry name" value="PRK04452.1-2"/>
    <property type="match status" value="1"/>
</dbReference>
<dbReference type="PANTHER" id="PTHR36214">
    <property type="match status" value="1"/>
</dbReference>
<dbReference type="PANTHER" id="PTHR36214:SF5">
    <property type="entry name" value="ACETYL-COA DECARBONYLASE_SYNTHASE COMPLEX SUBUNIT DELTA"/>
    <property type="match status" value="1"/>
</dbReference>
<dbReference type="Pfam" id="PF03599">
    <property type="entry name" value="CdhD"/>
    <property type="match status" value="1"/>
</dbReference>
<dbReference type="SUPFAM" id="SSF51717">
    <property type="entry name" value="Dihydropteroate synthetase-like"/>
    <property type="match status" value="1"/>
</dbReference>
<protein>
    <recommendedName>
        <fullName evidence="1">Acetyl-CoA decarbonylase/synthase complex subunit delta</fullName>
        <shortName evidence="1">ACDS complex subunit delta</shortName>
    </recommendedName>
    <alternativeName>
        <fullName evidence="1">Corrinoid/iron-sulfur component small subunit</fullName>
    </alternativeName>
</protein>
<evidence type="ECO:0000255" key="1">
    <source>
        <dbReference type="HAMAP-Rule" id="MF_01135"/>
    </source>
</evidence>
<feature type="chain" id="PRO_0000155109" description="Acetyl-CoA decarbonylase/synthase complex subunit delta">
    <location>
        <begin position="1"/>
        <end position="452"/>
    </location>
</feature>
<reference key="1">
    <citation type="journal article" date="1997" name="Nature">
        <title>The complete genome sequence of the hyperthermophilic, sulphate-reducing archaeon Archaeoglobus fulgidus.</title>
        <authorList>
            <person name="Klenk H.-P."/>
            <person name="Clayton R.A."/>
            <person name="Tomb J.-F."/>
            <person name="White O."/>
            <person name="Nelson K.E."/>
            <person name="Ketchum K.A."/>
            <person name="Dodson R.J."/>
            <person name="Gwinn M.L."/>
            <person name="Hickey E.K."/>
            <person name="Peterson J.D."/>
            <person name="Richardson D.L."/>
            <person name="Kerlavage A.R."/>
            <person name="Graham D.E."/>
            <person name="Kyrpides N.C."/>
            <person name="Fleischmann R.D."/>
            <person name="Quackenbush J."/>
            <person name="Lee N.H."/>
            <person name="Sutton G.G."/>
            <person name="Gill S.R."/>
            <person name="Kirkness E.F."/>
            <person name="Dougherty B.A."/>
            <person name="McKenney K."/>
            <person name="Adams M.D."/>
            <person name="Loftus B.J."/>
            <person name="Peterson S.N."/>
            <person name="Reich C.I."/>
            <person name="McNeil L.K."/>
            <person name="Badger J.H."/>
            <person name="Glodek A."/>
            <person name="Zhou L."/>
            <person name="Overbeek R."/>
            <person name="Gocayne J.D."/>
            <person name="Weidman J.F."/>
            <person name="McDonald L.A."/>
            <person name="Utterback T.R."/>
            <person name="Cotton M.D."/>
            <person name="Spriggs T."/>
            <person name="Artiach P."/>
            <person name="Kaine B.P."/>
            <person name="Sykes S.M."/>
            <person name="Sadow P.W."/>
            <person name="D'Andrea K.P."/>
            <person name="Bowman C."/>
            <person name="Fujii C."/>
            <person name="Garland S.A."/>
            <person name="Mason T.M."/>
            <person name="Olsen G.J."/>
            <person name="Fraser C.M."/>
            <person name="Smith H.O."/>
            <person name="Woese C.R."/>
            <person name="Venter J.C."/>
        </authorList>
    </citation>
    <scope>NUCLEOTIDE SEQUENCE [LARGE SCALE GENOMIC DNA]</scope>
    <source>
        <strain>ATCC 49558 / DSM 4304 / JCM 9628 / NBRC 100126 / VC-16</strain>
    </source>
</reference>
<reference key="2">
    <citation type="journal article" date="1998" name="Arch. Microbiol.">
        <title>Acetyl-CoA decarbonylase/synthase complex from Archaeoglobus fulgidus.</title>
        <authorList>
            <person name="Dai Y.R."/>
            <person name="Reed D.W."/>
            <person name="Millstein J.H."/>
            <person name="Hartzell P.L."/>
            <person name="Grahame D.A."/>
            <person name="DeMoll E."/>
        </authorList>
    </citation>
    <scope>PROTEIN SEQUENCE OF 1-18</scope>
    <source>
        <strain>ATCC 49558 / DSM 4304 / JCM 9628 / NBRC 100126 / VC-16</strain>
    </source>
</reference>
<organism>
    <name type="scientific">Archaeoglobus fulgidus (strain ATCC 49558 / DSM 4304 / JCM 9628 / NBRC 100126 / VC-16)</name>
    <dbReference type="NCBI Taxonomy" id="224325"/>
    <lineage>
        <taxon>Archaea</taxon>
        <taxon>Methanobacteriati</taxon>
        <taxon>Methanobacteriota</taxon>
        <taxon>Archaeoglobi</taxon>
        <taxon>Archaeoglobales</taxon>
        <taxon>Archaeoglobaceae</taxon>
        <taxon>Archaeoglobus</taxon>
    </lineage>
</organism>
<keyword id="KW-0903">Direct protein sequencing</keyword>
<keyword id="KW-1185">Reference proteome</keyword>
<gene>
    <name evidence="1" type="primary">cdhD</name>
    <name type="ordered locus">AF_0377</name>
</gene>
<accession>O29870</accession>
<proteinExistence type="evidence at protein level"/>
<name>ACDD_ARCFU</name>
<sequence>MKKFTLEEFLDLLKKYNVEEIEGVKIEGDLEIEFEGSSIDLSAIAPLYSMLSEFGNFLYHANMALGYLQRLSAALGIPTPFAAQPQLAPAAPAAPAEVPAVEELKIPAELVRAKFEPYKEEYPGKIEEVVLGATKADGGTREYTVTLGGERSLAFYTFDAPQPHLPAIAIDVFDRRPMLAKAVRMHYEDVLDNPAEWARKCVKKFGADLVTLHLISTDPLLDDTPASEAVKVLEDVLQAVKCPIIVGGSGNKEKDPEVLEKAAEVAEGERIMLASATLDMDWERIANAAKKYGHVVLSWTQMDINNQKTLNRYLLKRVEMPRDSIVMDPTTAALGYGLDYAFTNMERIRISGLKGDTDLNFPISSGTTNAWGAREAWMVDSPIEEDTPWGPRELRGPIWEIITGLTLSLAGVDLFMMMHPVAVAVLKEVFNTLGGKVSGGVADPGEWIFMEV</sequence>